<keyword id="KW-0068">Autocatalytic cleavage</keyword>
<keyword id="KW-0210">Decarboxylase</keyword>
<keyword id="KW-0456">Lyase</keyword>
<keyword id="KW-0620">Polyamine biosynthesis</keyword>
<keyword id="KW-0670">Pyruvate</keyword>
<keyword id="KW-0949">S-adenosyl-L-methionine</keyword>
<keyword id="KW-0704">Schiff base</keyword>
<keyword id="KW-0745">Spermidine biosynthesis</keyword>
<keyword id="KW-0865">Zymogen</keyword>
<proteinExistence type="inferred from homology"/>
<protein>
    <recommendedName>
        <fullName evidence="1">S-adenosylmethionine decarboxylase proenzyme</fullName>
        <shortName evidence="1">AdoMetDC</shortName>
        <shortName evidence="1">SAMDC</shortName>
        <ecNumber evidence="1">4.1.1.50</ecNumber>
    </recommendedName>
    <component>
        <recommendedName>
            <fullName evidence="1">S-adenosylmethionine decarboxylase beta chain</fullName>
        </recommendedName>
    </component>
    <component>
        <recommendedName>
            <fullName evidence="1">S-adenosylmethionine decarboxylase alpha chain</fullName>
        </recommendedName>
    </component>
</protein>
<reference key="1">
    <citation type="submission" date="2008-04" db="EMBL/GenBank/DDBJ databases">
        <title>Complete sequence of Clostridium botulinum strain Eklund.</title>
        <authorList>
            <person name="Brinkac L.M."/>
            <person name="Brown J.L."/>
            <person name="Bruce D."/>
            <person name="Detter C."/>
            <person name="Munk C."/>
            <person name="Smith L.A."/>
            <person name="Smith T.J."/>
            <person name="Sutton G."/>
            <person name="Brettin T.S."/>
        </authorList>
    </citation>
    <scope>NUCLEOTIDE SEQUENCE [LARGE SCALE GENOMIC DNA]</scope>
    <source>
        <strain>Eklund 17B / Type B</strain>
    </source>
</reference>
<gene>
    <name evidence="1" type="primary">speD</name>
    <name type="ordered locus">CLL_A1011</name>
</gene>
<name>SPED_CLOBB</name>
<evidence type="ECO:0000255" key="1">
    <source>
        <dbReference type="HAMAP-Rule" id="MF_00465"/>
    </source>
</evidence>
<dbReference type="EC" id="4.1.1.50" evidence="1"/>
<dbReference type="EMBL" id="CP001056">
    <property type="protein sequence ID" value="ACD23210.1"/>
    <property type="molecule type" value="Genomic_DNA"/>
</dbReference>
<dbReference type="SMR" id="B2TML8"/>
<dbReference type="KEGG" id="cbk:CLL_A1011"/>
<dbReference type="HOGENOM" id="CLU_092007_0_0_9"/>
<dbReference type="UniPathway" id="UPA00331">
    <property type="reaction ID" value="UER00451"/>
</dbReference>
<dbReference type="Proteomes" id="UP000001195">
    <property type="component" value="Chromosome"/>
</dbReference>
<dbReference type="GO" id="GO:0005829">
    <property type="term" value="C:cytosol"/>
    <property type="evidence" value="ECO:0007669"/>
    <property type="project" value="TreeGrafter"/>
</dbReference>
<dbReference type="GO" id="GO:0004014">
    <property type="term" value="F:adenosylmethionine decarboxylase activity"/>
    <property type="evidence" value="ECO:0007669"/>
    <property type="project" value="UniProtKB-UniRule"/>
</dbReference>
<dbReference type="GO" id="GO:0008295">
    <property type="term" value="P:spermidine biosynthetic process"/>
    <property type="evidence" value="ECO:0007669"/>
    <property type="project" value="UniProtKB-UniRule"/>
</dbReference>
<dbReference type="Gene3D" id="3.60.90.10">
    <property type="entry name" value="S-adenosylmethionine decarboxylase"/>
    <property type="match status" value="1"/>
</dbReference>
<dbReference type="HAMAP" id="MF_00465">
    <property type="entry name" value="AdoMetDC_2"/>
    <property type="match status" value="1"/>
</dbReference>
<dbReference type="InterPro" id="IPR003826">
    <property type="entry name" value="AdoMetDC_fam_prok"/>
</dbReference>
<dbReference type="InterPro" id="IPR009165">
    <property type="entry name" value="S-AdoMet_deCO2ase_bac"/>
</dbReference>
<dbReference type="InterPro" id="IPR016067">
    <property type="entry name" value="S-AdoMet_deCO2ase_core"/>
</dbReference>
<dbReference type="NCBIfam" id="TIGR03331">
    <property type="entry name" value="SAM_DCase_Eco"/>
    <property type="match status" value="1"/>
</dbReference>
<dbReference type="PANTHER" id="PTHR33866">
    <property type="entry name" value="S-ADENOSYLMETHIONINE DECARBOXYLASE PROENZYME"/>
    <property type="match status" value="1"/>
</dbReference>
<dbReference type="PANTHER" id="PTHR33866:SF1">
    <property type="entry name" value="S-ADENOSYLMETHIONINE DECARBOXYLASE PROENZYME"/>
    <property type="match status" value="1"/>
</dbReference>
<dbReference type="Pfam" id="PF02675">
    <property type="entry name" value="AdoMet_dc"/>
    <property type="match status" value="1"/>
</dbReference>
<dbReference type="PIRSF" id="PIRSF001356">
    <property type="entry name" value="SAM_decarboxylas"/>
    <property type="match status" value="1"/>
</dbReference>
<dbReference type="SUPFAM" id="SSF56276">
    <property type="entry name" value="S-adenosylmethionine decarboxylase"/>
    <property type="match status" value="1"/>
</dbReference>
<feature type="chain" id="PRO_0000364365" description="S-adenosylmethionine decarboxylase beta chain" evidence="1">
    <location>
        <begin position="1"/>
        <end position="121"/>
    </location>
</feature>
<feature type="chain" id="PRO_0000364366" description="S-adenosylmethionine decarboxylase alpha chain" evidence="1">
    <location>
        <begin position="122"/>
        <end position="272"/>
    </location>
</feature>
<feature type="active site" description="Schiff-base intermediate with substrate; via pyruvic acid" evidence="1">
    <location>
        <position position="122"/>
    </location>
</feature>
<feature type="active site" description="Proton acceptor; for processing activity" evidence="1">
    <location>
        <position position="127"/>
    </location>
</feature>
<feature type="active site" description="Proton donor; for catalytic activity" evidence="1">
    <location>
        <position position="150"/>
    </location>
</feature>
<feature type="site" description="Cleavage (non-hydrolytic); by autolysis" evidence="1">
    <location>
        <begin position="121"/>
        <end position="122"/>
    </location>
</feature>
<feature type="modified residue" description="Pyruvic acid (Ser); by autocatalysis" evidence="1">
    <location>
        <position position="122"/>
    </location>
</feature>
<comment type="function">
    <text evidence="1">Catalyzes the decarboxylation of S-adenosylmethionine to S-adenosylmethioninamine (dcAdoMet), the propylamine donor required for the synthesis of the polyamines spermine and spermidine from the diamine putrescine.</text>
</comment>
<comment type="catalytic activity">
    <reaction evidence="1">
        <text>S-adenosyl-L-methionine + H(+) = S-adenosyl 3-(methylsulfanyl)propylamine + CO2</text>
        <dbReference type="Rhea" id="RHEA:15981"/>
        <dbReference type="ChEBI" id="CHEBI:15378"/>
        <dbReference type="ChEBI" id="CHEBI:16526"/>
        <dbReference type="ChEBI" id="CHEBI:57443"/>
        <dbReference type="ChEBI" id="CHEBI:59789"/>
        <dbReference type="EC" id="4.1.1.50"/>
    </reaction>
</comment>
<comment type="cofactor">
    <cofactor evidence="1">
        <name>pyruvate</name>
        <dbReference type="ChEBI" id="CHEBI:15361"/>
    </cofactor>
    <text evidence="1">Binds 1 pyruvoyl group covalently per subunit.</text>
</comment>
<comment type="pathway">
    <text evidence="1">Amine and polyamine biosynthesis; S-adenosylmethioninamine biosynthesis; S-adenosylmethioninamine from S-adenosyl-L-methionine: step 1/1.</text>
</comment>
<comment type="subunit">
    <text evidence="1">Heterooctamer of four alpha and four beta chains arranged as a tetramer of alpha/beta heterodimers.</text>
</comment>
<comment type="PTM">
    <text evidence="1">Is synthesized initially as an inactive proenzyme. Formation of the active enzyme involves a self-maturation process in which the active site pyruvoyl group is generated from an internal serine residue via an autocatalytic post-translational modification. Two non-identical subunits are generated from the proenzyme in this reaction, and the pyruvate is formed at the N-terminus of the alpha chain, which is derived from the carboxyl end of the proenzyme. The post-translation cleavage follows an unusual pathway, termed non-hydrolytic serinolysis, in which the side chain hydroxyl group of the serine supplies its oxygen atom to form the C-terminus of the beta chain, while the remainder of the serine residue undergoes an oxidative deamination to produce ammonia and the pyruvoyl group blocking the N-terminus of the alpha chain.</text>
</comment>
<comment type="similarity">
    <text evidence="1">Belongs to the prokaryotic AdoMetDC family. Type 2 subfamily.</text>
</comment>
<sequence length="272" mass="31557">MMLGLENKLKLYGFNNLTKTLSFNIYDVCYAKSEREQKDYIAYIDEQYNSERLTNILCDVTKMIGAHVLNISKQDYDPQGASVTILISEETLAVKEIDKSCNLGQIDILNTRDTIVGHLDKSHVTVHTYPEYHPDNSIATFRVDIDVSTCGEVSPLNALNYLIGSFDSDIITIDYRVRGFTRDVDGKKLFIDHKITSIQDYIDENTLKRYDAMDINVYQSNIFHTKMLIKEIELQNYLFNRDVYEIKPKQRLEIENNLRKEMIEIFSGTNIY</sequence>
<accession>B2TML8</accession>
<organism>
    <name type="scientific">Clostridium botulinum (strain Eklund 17B / Type B)</name>
    <dbReference type="NCBI Taxonomy" id="935198"/>
    <lineage>
        <taxon>Bacteria</taxon>
        <taxon>Bacillati</taxon>
        <taxon>Bacillota</taxon>
        <taxon>Clostridia</taxon>
        <taxon>Eubacteriales</taxon>
        <taxon>Clostridiaceae</taxon>
        <taxon>Clostridium</taxon>
    </lineage>
</organism>